<gene>
    <name type="ordered locus">PA14_47450</name>
</gene>
<proteinExistence type="inferred from homology"/>
<protein>
    <recommendedName>
        <fullName evidence="1">YcgL domain-containing protein PA14_47450</fullName>
    </recommendedName>
</protein>
<name>Y4745_PSEAB</name>
<dbReference type="EMBL" id="CP000438">
    <property type="protein sequence ID" value="ABJ10483.1"/>
    <property type="molecule type" value="Genomic_DNA"/>
</dbReference>
<dbReference type="RefSeq" id="WP_003082651.1">
    <property type="nucleotide sequence ID" value="NZ_CP034244.1"/>
</dbReference>
<dbReference type="SMR" id="Q02JD6"/>
<dbReference type="KEGG" id="pau:PA14_47450"/>
<dbReference type="PseudoCAP" id="PA14_47450"/>
<dbReference type="HOGENOM" id="CLU_155118_2_0_6"/>
<dbReference type="BioCyc" id="PAER208963:G1G74-3989-MONOMER"/>
<dbReference type="Proteomes" id="UP000000653">
    <property type="component" value="Chromosome"/>
</dbReference>
<dbReference type="Gene3D" id="3.10.510.20">
    <property type="entry name" value="YcgL domain"/>
    <property type="match status" value="1"/>
</dbReference>
<dbReference type="HAMAP" id="MF_01866">
    <property type="entry name" value="UPF0745"/>
    <property type="match status" value="1"/>
</dbReference>
<dbReference type="InterPro" id="IPR038068">
    <property type="entry name" value="YcgL-like_sf"/>
</dbReference>
<dbReference type="InterPro" id="IPR027354">
    <property type="entry name" value="YcgL_dom"/>
</dbReference>
<dbReference type="PANTHER" id="PTHR38109">
    <property type="entry name" value="PROTEIN YCGL"/>
    <property type="match status" value="1"/>
</dbReference>
<dbReference type="PANTHER" id="PTHR38109:SF1">
    <property type="entry name" value="PROTEIN YCGL"/>
    <property type="match status" value="1"/>
</dbReference>
<dbReference type="Pfam" id="PF05166">
    <property type="entry name" value="YcgL"/>
    <property type="match status" value="1"/>
</dbReference>
<dbReference type="SUPFAM" id="SSF160191">
    <property type="entry name" value="YcgL-like"/>
    <property type="match status" value="1"/>
</dbReference>
<dbReference type="PROSITE" id="PS51648">
    <property type="entry name" value="YCGL"/>
    <property type="match status" value="1"/>
</dbReference>
<organism>
    <name type="scientific">Pseudomonas aeruginosa (strain UCBPP-PA14)</name>
    <dbReference type="NCBI Taxonomy" id="208963"/>
    <lineage>
        <taxon>Bacteria</taxon>
        <taxon>Pseudomonadati</taxon>
        <taxon>Pseudomonadota</taxon>
        <taxon>Gammaproteobacteria</taxon>
        <taxon>Pseudomonadales</taxon>
        <taxon>Pseudomonadaceae</taxon>
        <taxon>Pseudomonas</taxon>
    </lineage>
</organism>
<accession>Q02JD6</accession>
<sequence>MKRICSVYKSPRKNEMYLYVDKREALSRVPEALLVPFGAPQHVFDLLLTPERQLAREDVAKVLENIEKQGFHLQMPPGEEEYIEHLPEELLRMNDPL</sequence>
<feature type="chain" id="PRO_0000375330" description="YcgL domain-containing protein PA14_47450">
    <location>
        <begin position="1"/>
        <end position="97"/>
    </location>
</feature>
<feature type="domain" description="YcgL" evidence="1">
    <location>
        <begin position="3"/>
        <end position="87"/>
    </location>
</feature>
<reference key="1">
    <citation type="journal article" date="2006" name="Genome Biol.">
        <title>Genomic analysis reveals that Pseudomonas aeruginosa virulence is combinatorial.</title>
        <authorList>
            <person name="Lee D.G."/>
            <person name="Urbach J.M."/>
            <person name="Wu G."/>
            <person name="Liberati N.T."/>
            <person name="Feinbaum R.L."/>
            <person name="Miyata S."/>
            <person name="Diggins L.T."/>
            <person name="He J."/>
            <person name="Saucier M."/>
            <person name="Deziel E."/>
            <person name="Friedman L."/>
            <person name="Li L."/>
            <person name="Grills G."/>
            <person name="Montgomery K."/>
            <person name="Kucherlapati R."/>
            <person name="Rahme L.G."/>
            <person name="Ausubel F.M."/>
        </authorList>
    </citation>
    <scope>NUCLEOTIDE SEQUENCE [LARGE SCALE GENOMIC DNA]</scope>
    <source>
        <strain>UCBPP-PA14</strain>
    </source>
</reference>
<evidence type="ECO:0000255" key="1">
    <source>
        <dbReference type="HAMAP-Rule" id="MF_01866"/>
    </source>
</evidence>